<keyword id="KW-0106">Calcium</keyword>
<keyword id="KW-1015">Disulfide bond</keyword>
<keyword id="KW-1199">Hemostasis impairing toxin</keyword>
<keyword id="KW-0378">Hydrolase</keyword>
<keyword id="KW-0442">Lipid degradation</keyword>
<keyword id="KW-0443">Lipid metabolism</keyword>
<keyword id="KW-0479">Metal-binding</keyword>
<keyword id="KW-1201">Platelet aggregation inhibiting toxin</keyword>
<keyword id="KW-0964">Secreted</keyword>
<keyword id="KW-0732">Signal</keyword>
<keyword id="KW-0800">Toxin</keyword>
<reference key="1">
    <citation type="journal article" date="2000" name="Arch. Biochem. Biophys.">
        <title>Phospholipase A(2) with platelet aggregation inhibitor activity from Austrelaps superbus venom: protein purification and cDNA cloning.</title>
        <authorList>
            <person name="Singh S.B."/>
            <person name="Armugam A."/>
            <person name="Kini R.M."/>
            <person name="Jeyaseelan K."/>
        </authorList>
    </citation>
    <scope>NUCLEOTIDE SEQUENCE [MRNA]</scope>
    <source>
        <tissue>Venom gland</tissue>
    </source>
</reference>
<dbReference type="EC" id="3.1.1.4"/>
<dbReference type="EMBL" id="AF184132">
    <property type="protein sequence ID" value="AAD56555.1"/>
    <property type="molecule type" value="mRNA"/>
</dbReference>
<dbReference type="SMR" id="Q9PUH8"/>
<dbReference type="GO" id="GO:0005576">
    <property type="term" value="C:extracellular region"/>
    <property type="evidence" value="ECO:0007669"/>
    <property type="project" value="UniProtKB-SubCell"/>
</dbReference>
<dbReference type="GO" id="GO:0005509">
    <property type="term" value="F:calcium ion binding"/>
    <property type="evidence" value="ECO:0007669"/>
    <property type="project" value="InterPro"/>
</dbReference>
<dbReference type="GO" id="GO:0047498">
    <property type="term" value="F:calcium-dependent phospholipase A2 activity"/>
    <property type="evidence" value="ECO:0007669"/>
    <property type="project" value="TreeGrafter"/>
</dbReference>
<dbReference type="GO" id="GO:0005543">
    <property type="term" value="F:phospholipid binding"/>
    <property type="evidence" value="ECO:0007669"/>
    <property type="project" value="TreeGrafter"/>
</dbReference>
<dbReference type="GO" id="GO:0090729">
    <property type="term" value="F:toxin activity"/>
    <property type="evidence" value="ECO:0007669"/>
    <property type="project" value="UniProtKB-KW"/>
</dbReference>
<dbReference type="GO" id="GO:0050482">
    <property type="term" value="P:arachidonate secretion"/>
    <property type="evidence" value="ECO:0007669"/>
    <property type="project" value="InterPro"/>
</dbReference>
<dbReference type="GO" id="GO:0016042">
    <property type="term" value="P:lipid catabolic process"/>
    <property type="evidence" value="ECO:0007669"/>
    <property type="project" value="UniProtKB-KW"/>
</dbReference>
<dbReference type="GO" id="GO:0006644">
    <property type="term" value="P:phospholipid metabolic process"/>
    <property type="evidence" value="ECO:0007669"/>
    <property type="project" value="InterPro"/>
</dbReference>
<dbReference type="CDD" id="cd00125">
    <property type="entry name" value="PLA2c"/>
    <property type="match status" value="1"/>
</dbReference>
<dbReference type="FunFam" id="1.20.90.10:FF:000007">
    <property type="entry name" value="Acidic phospholipase A2"/>
    <property type="match status" value="1"/>
</dbReference>
<dbReference type="Gene3D" id="1.20.90.10">
    <property type="entry name" value="Phospholipase A2 domain"/>
    <property type="match status" value="1"/>
</dbReference>
<dbReference type="InterPro" id="IPR001211">
    <property type="entry name" value="PLipase_A2"/>
</dbReference>
<dbReference type="InterPro" id="IPR033112">
    <property type="entry name" value="PLipase_A2_Asp_AS"/>
</dbReference>
<dbReference type="InterPro" id="IPR016090">
    <property type="entry name" value="PLipase_A2_dom"/>
</dbReference>
<dbReference type="InterPro" id="IPR036444">
    <property type="entry name" value="PLipase_A2_dom_sf"/>
</dbReference>
<dbReference type="InterPro" id="IPR033113">
    <property type="entry name" value="PLipase_A2_His_AS"/>
</dbReference>
<dbReference type="PANTHER" id="PTHR11716:SF51">
    <property type="entry name" value="PHOSPHOLIPASE A2"/>
    <property type="match status" value="1"/>
</dbReference>
<dbReference type="PANTHER" id="PTHR11716">
    <property type="entry name" value="PHOSPHOLIPASE A2 FAMILY MEMBER"/>
    <property type="match status" value="1"/>
</dbReference>
<dbReference type="Pfam" id="PF00068">
    <property type="entry name" value="Phospholip_A2_1"/>
    <property type="match status" value="1"/>
</dbReference>
<dbReference type="PRINTS" id="PR00389">
    <property type="entry name" value="PHPHLIPASEA2"/>
</dbReference>
<dbReference type="SMART" id="SM00085">
    <property type="entry name" value="PA2c"/>
    <property type="match status" value="1"/>
</dbReference>
<dbReference type="SUPFAM" id="SSF48619">
    <property type="entry name" value="Phospholipase A2, PLA2"/>
    <property type="match status" value="1"/>
</dbReference>
<dbReference type="PROSITE" id="PS00119">
    <property type="entry name" value="PA2_ASP"/>
    <property type="match status" value="1"/>
</dbReference>
<dbReference type="PROSITE" id="PS00118">
    <property type="entry name" value="PA2_HIS"/>
    <property type="match status" value="1"/>
</dbReference>
<accession>Q9PUH8</accession>
<feature type="signal peptide" evidence="2">
    <location>
        <begin position="1"/>
        <end position="19"/>
    </location>
</feature>
<feature type="propeptide" id="PRO_0000022795" evidence="2">
    <location>
        <begin position="20"/>
        <end position="27"/>
    </location>
</feature>
<feature type="chain" id="PRO_0000022796" description="Acidic phospholipase A2 S3-24">
    <location>
        <begin position="28"/>
        <end position="147"/>
    </location>
</feature>
<feature type="active site" evidence="1">
    <location>
        <position position="75"/>
    </location>
</feature>
<feature type="active site" evidence="1">
    <location>
        <position position="121"/>
    </location>
</feature>
<feature type="binding site" evidence="1">
    <location>
        <position position="55"/>
    </location>
    <ligand>
        <name>Ca(2+)</name>
        <dbReference type="ChEBI" id="CHEBI:29108"/>
    </ligand>
</feature>
<feature type="binding site" evidence="1">
    <location>
        <position position="57"/>
    </location>
    <ligand>
        <name>Ca(2+)</name>
        <dbReference type="ChEBI" id="CHEBI:29108"/>
    </ligand>
</feature>
<feature type="binding site" evidence="1">
    <location>
        <position position="59"/>
    </location>
    <ligand>
        <name>Ca(2+)</name>
        <dbReference type="ChEBI" id="CHEBI:29108"/>
    </ligand>
</feature>
<feature type="binding site" evidence="1">
    <location>
        <position position="76"/>
    </location>
    <ligand>
        <name>Ca(2+)</name>
        <dbReference type="ChEBI" id="CHEBI:29108"/>
    </ligand>
</feature>
<feature type="disulfide bond" evidence="1">
    <location>
        <begin position="38"/>
        <end position="99"/>
    </location>
</feature>
<feature type="disulfide bond" evidence="1">
    <location>
        <begin position="54"/>
        <end position="146"/>
    </location>
</feature>
<feature type="disulfide bond" evidence="1">
    <location>
        <begin position="56"/>
        <end position="72"/>
    </location>
</feature>
<feature type="disulfide bond" evidence="1">
    <location>
        <begin position="71"/>
        <end position="127"/>
    </location>
</feature>
<feature type="disulfide bond" evidence="1">
    <location>
        <begin position="78"/>
        <end position="120"/>
    </location>
</feature>
<feature type="disulfide bond" evidence="1">
    <location>
        <begin position="88"/>
        <end position="113"/>
    </location>
</feature>
<feature type="disulfide bond" evidence="1">
    <location>
        <begin position="106"/>
        <end position="118"/>
    </location>
</feature>
<protein>
    <recommendedName>
        <fullName>Acidic phospholipase A2 S3-24</fullName>
        <shortName>svPLA2</shortName>
        <ecNumber>3.1.1.4</ecNumber>
    </recommendedName>
    <alternativeName>
        <fullName>ASPLA6</fullName>
    </alternativeName>
    <alternativeName>
        <fullName>Phosphatidylcholine 2-acylhydrolase</fullName>
    </alternativeName>
</protein>
<sequence length="147" mass="16212">MYPAHLLVLLAVCVSLLGASDMPPQPLNLVQFSNMIQCANHGRRPTSNYMDYGCYCGKGGSGTPVDALDRCCKIHDDCYGEAEKSQNCAPYWTWYTWKCGSDGPQCDDSETGCKRIVCDCDVEAADCFAGAPYNNANWNIDTKKRCQ</sequence>
<proteinExistence type="evidence at transcript level"/>
<organism>
    <name type="scientific">Austrelaps superbus</name>
    <name type="common">Lowland copperhead snake</name>
    <name type="synonym">Hoplocephalus superbus</name>
    <dbReference type="NCBI Taxonomy" id="29156"/>
    <lineage>
        <taxon>Eukaryota</taxon>
        <taxon>Metazoa</taxon>
        <taxon>Chordata</taxon>
        <taxon>Craniata</taxon>
        <taxon>Vertebrata</taxon>
        <taxon>Euteleostomi</taxon>
        <taxon>Lepidosauria</taxon>
        <taxon>Squamata</taxon>
        <taxon>Bifurcata</taxon>
        <taxon>Unidentata</taxon>
        <taxon>Episquamata</taxon>
        <taxon>Toxicofera</taxon>
        <taxon>Serpentes</taxon>
        <taxon>Colubroidea</taxon>
        <taxon>Elapidae</taxon>
        <taxon>Hydrophiinae</taxon>
        <taxon>Austrelaps</taxon>
    </lineage>
</organism>
<evidence type="ECO:0000250" key="1"/>
<evidence type="ECO:0000255" key="2"/>
<evidence type="ECO:0000255" key="3">
    <source>
        <dbReference type="PROSITE-ProRule" id="PRU10035"/>
    </source>
</evidence>
<evidence type="ECO:0000255" key="4">
    <source>
        <dbReference type="PROSITE-ProRule" id="PRU10036"/>
    </source>
</evidence>
<evidence type="ECO:0000305" key="5"/>
<comment type="function">
    <text evidence="1">Snake venom phospholipase A2 (PLA2) that inhibits collagen-induced platelet aggregation. PLA2 catalyzes the calcium-dependent hydrolysis of the 2-acyl groups in 3-sn-phosphoglycerides (By similarity).</text>
</comment>
<comment type="catalytic activity">
    <reaction evidence="3 4">
        <text>a 1,2-diacyl-sn-glycero-3-phosphocholine + H2O = a 1-acyl-sn-glycero-3-phosphocholine + a fatty acid + H(+)</text>
        <dbReference type="Rhea" id="RHEA:15801"/>
        <dbReference type="ChEBI" id="CHEBI:15377"/>
        <dbReference type="ChEBI" id="CHEBI:15378"/>
        <dbReference type="ChEBI" id="CHEBI:28868"/>
        <dbReference type="ChEBI" id="CHEBI:57643"/>
        <dbReference type="ChEBI" id="CHEBI:58168"/>
        <dbReference type="EC" id="3.1.1.4"/>
    </reaction>
</comment>
<comment type="cofactor">
    <cofactor evidence="1">
        <name>Ca(2+)</name>
        <dbReference type="ChEBI" id="CHEBI:29108"/>
    </cofactor>
    <text evidence="1">Binds 1 Ca(2+) ion.</text>
</comment>
<comment type="subcellular location">
    <subcellularLocation>
        <location evidence="1">Secreted</location>
    </subcellularLocation>
</comment>
<comment type="tissue specificity">
    <text>Expressed by the venom gland.</text>
</comment>
<comment type="similarity">
    <text evidence="5">Belongs to the phospholipase A2 family. Group I subfamily. D49 sub-subfamily.</text>
</comment>
<name>PA2A6_AUSSU</name>